<reference key="1">
    <citation type="journal article" date="1991" name="DNA Cell Biol.">
        <title>Gene expression and cDNA cloning identified a major basic protein constituent of bovine seminal plasma as bovine monocyte-chemoattractant protein-1 (MCP-1).</title>
        <authorList>
            <person name="Wempe F."/>
            <person name="Henschen A."/>
            <person name="Scheit K.H."/>
        </authorList>
    </citation>
    <scope>NUCLEOTIDE SEQUENCE [MRNA]</scope>
    <source>
        <tissue>Seminal plasma</tissue>
    </source>
</reference>
<reference key="2">
    <citation type="journal article" date="1992" name="Biochem. Biophys. Res. Commun.">
        <title>Characterization by cDNA cloning of the mRNA of a new growth factor from bovine seminal plasma: acidic seminal fluid protein.</title>
        <authorList>
            <person name="Wempe F."/>
            <person name="Einspanier R."/>
            <person name="Scheit K.H."/>
        </authorList>
    </citation>
    <scope>NUCLEOTIDE SEQUENCE [MRNA]</scope>
    <source>
        <tissue>Seminal plasma</tissue>
    </source>
</reference>
<reference key="3">
    <citation type="journal article" date="1994" name="Biochem. Biophys. Res. Commun.">
        <title>Characterization of the bovine monocyte chemoattractant protein-1 gene.</title>
        <authorList>
            <person name="Wempe F."/>
            <person name="Kuhlmann J.K."/>
            <person name="Scheit K.H."/>
        </authorList>
    </citation>
    <scope>NUCLEOTIDE SEQUENCE [GENOMIC DNA]</scope>
</reference>
<reference key="4">
    <citation type="submission" date="2007-11" db="EMBL/GenBank/DDBJ databases">
        <title>U.S. veterinary immune reagent network: expressed bovine gene sequences.</title>
        <authorList>
            <consortium name="U.S. Veterinary Immune Reagent Network"/>
            <person name="Hudgens T."/>
            <person name="Tompkins D."/>
            <person name="Baldwin C.L."/>
        </authorList>
    </citation>
    <scope>NUCLEOTIDE SEQUENCE [LARGE SCALE MRNA]</scope>
    <source>
        <strain>Belted Galloway</strain>
        <tissue>Peripheral blood</tissue>
    </source>
</reference>
<accession>P28291</accession>
<accession>A9QWP7</accession>
<feature type="signal peptide" evidence="1">
    <location>
        <begin position="1"/>
        <end position="23"/>
    </location>
</feature>
<feature type="chain" id="PRO_0000005244" description="C-C motif chemokine 2">
    <location>
        <begin position="24"/>
        <end position="99"/>
    </location>
</feature>
<feature type="modified residue" description="Pyrrolidone carboxylic acid" evidence="3">
    <location>
        <position position="24"/>
    </location>
</feature>
<feature type="disulfide bond" evidence="1">
    <location>
        <begin position="34"/>
        <end position="59"/>
    </location>
</feature>
<feature type="disulfide bond" evidence="1">
    <location>
        <begin position="35"/>
        <end position="75"/>
    </location>
</feature>
<evidence type="ECO:0000250" key="1"/>
<evidence type="ECO:0000250" key="2">
    <source>
        <dbReference type="UniProtKB" id="P10148"/>
    </source>
</evidence>
<evidence type="ECO:0000250" key="3">
    <source>
        <dbReference type="UniProtKB" id="P13500"/>
    </source>
</evidence>
<evidence type="ECO:0000305" key="4"/>
<gene>
    <name type="primary">CCL2</name>
    <name type="synonym">SCYA2</name>
</gene>
<name>CCL2_BOVIN</name>
<dbReference type="EMBL" id="M84602">
    <property type="protein sequence ID" value="AAA30651.1"/>
    <property type="molecule type" value="mRNA"/>
</dbReference>
<dbReference type="EMBL" id="L32659">
    <property type="protein sequence ID" value="AAA60956.1"/>
    <property type="molecule type" value="Genomic_DNA"/>
</dbReference>
<dbReference type="EMBL" id="EU276059">
    <property type="protein sequence ID" value="ABX72057.1"/>
    <property type="molecule type" value="mRNA"/>
</dbReference>
<dbReference type="PIR" id="A39296">
    <property type="entry name" value="A39296"/>
</dbReference>
<dbReference type="RefSeq" id="NP_776431.1">
    <property type="nucleotide sequence ID" value="NM_174006.2"/>
</dbReference>
<dbReference type="SMR" id="P28291"/>
<dbReference type="FunCoup" id="P28291">
    <property type="interactions" value="355"/>
</dbReference>
<dbReference type="STRING" id="9913.ENSBTAP00000013146"/>
<dbReference type="PaxDb" id="9913-ENSBTAP00000013146"/>
<dbReference type="Ensembl" id="ENSBTAT00000135570.1">
    <property type="protein sequence ID" value="ENSBTAP00000076954.1"/>
    <property type="gene ID" value="ENSBTAG00000060433.1"/>
</dbReference>
<dbReference type="GeneID" id="281043"/>
<dbReference type="KEGG" id="bta:281043"/>
<dbReference type="CTD" id="6347"/>
<dbReference type="VEuPathDB" id="HostDB:ENSBTAG00000037811"/>
<dbReference type="eggNOG" id="ENOG502S6ZP">
    <property type="taxonomic scope" value="Eukaryota"/>
</dbReference>
<dbReference type="GeneTree" id="ENSGT01130000278316"/>
<dbReference type="HOGENOM" id="CLU_141716_1_0_1"/>
<dbReference type="InParanoid" id="P28291"/>
<dbReference type="OMA" id="PNQKWVK"/>
<dbReference type="OrthoDB" id="8934837at2759"/>
<dbReference type="TreeFam" id="TF334888"/>
<dbReference type="Reactome" id="R-BTA-380108">
    <property type="pathway name" value="Chemokine receptors bind chemokines"/>
</dbReference>
<dbReference type="Proteomes" id="UP000009136">
    <property type="component" value="Chromosome 19"/>
</dbReference>
<dbReference type="Bgee" id="ENSBTAG00000037811">
    <property type="expression patterns" value="Expressed in intramuscular adipose tissue and 98 other cell types or tissues"/>
</dbReference>
<dbReference type="GO" id="GO:0005615">
    <property type="term" value="C:extracellular space"/>
    <property type="evidence" value="ECO:0000318"/>
    <property type="project" value="GO_Central"/>
</dbReference>
<dbReference type="GO" id="GO:0048020">
    <property type="term" value="F:CCR chemokine receptor binding"/>
    <property type="evidence" value="ECO:0000318"/>
    <property type="project" value="GO_Central"/>
</dbReference>
<dbReference type="GO" id="GO:0008009">
    <property type="term" value="F:chemokine activity"/>
    <property type="evidence" value="ECO:0000318"/>
    <property type="project" value="GO_Central"/>
</dbReference>
<dbReference type="GO" id="GO:0061844">
    <property type="term" value="P:antimicrobial humoral immune response mediated by antimicrobial peptide"/>
    <property type="evidence" value="ECO:0000318"/>
    <property type="project" value="GO_Central"/>
</dbReference>
<dbReference type="GO" id="GO:0043615">
    <property type="term" value="P:astrocyte cell migration"/>
    <property type="evidence" value="ECO:0007669"/>
    <property type="project" value="Ensembl"/>
</dbReference>
<dbReference type="GO" id="GO:0044344">
    <property type="term" value="P:cellular response to fibroblast growth factor stimulus"/>
    <property type="evidence" value="ECO:0007669"/>
    <property type="project" value="Ensembl"/>
</dbReference>
<dbReference type="GO" id="GO:0071347">
    <property type="term" value="P:cellular response to interleukin-1"/>
    <property type="evidence" value="ECO:0007669"/>
    <property type="project" value="Ensembl"/>
</dbReference>
<dbReference type="GO" id="GO:0071356">
    <property type="term" value="P:cellular response to tumor necrosis factor"/>
    <property type="evidence" value="ECO:0007669"/>
    <property type="project" value="Ensembl"/>
</dbReference>
<dbReference type="GO" id="GO:0071346">
    <property type="term" value="P:cellular response to type II interferon"/>
    <property type="evidence" value="ECO:0007669"/>
    <property type="project" value="Ensembl"/>
</dbReference>
<dbReference type="GO" id="GO:0070098">
    <property type="term" value="P:chemokine-mediated signaling pathway"/>
    <property type="evidence" value="ECO:0000318"/>
    <property type="project" value="GO_Central"/>
</dbReference>
<dbReference type="GO" id="GO:0007010">
    <property type="term" value="P:cytoskeleton organization"/>
    <property type="evidence" value="ECO:0007669"/>
    <property type="project" value="Ensembl"/>
</dbReference>
<dbReference type="GO" id="GO:0048245">
    <property type="term" value="P:eosinophil chemotaxis"/>
    <property type="evidence" value="ECO:0000318"/>
    <property type="project" value="GO_Central"/>
</dbReference>
<dbReference type="GO" id="GO:0006954">
    <property type="term" value="P:inflammatory response"/>
    <property type="evidence" value="ECO:0000318"/>
    <property type="project" value="GO_Central"/>
</dbReference>
<dbReference type="GO" id="GO:0048246">
    <property type="term" value="P:macrophage chemotaxis"/>
    <property type="evidence" value="ECO:0007669"/>
    <property type="project" value="Ensembl"/>
</dbReference>
<dbReference type="GO" id="GO:0002548">
    <property type="term" value="P:monocyte chemotaxis"/>
    <property type="evidence" value="ECO:0007669"/>
    <property type="project" value="Ensembl"/>
</dbReference>
<dbReference type="GO" id="GO:2000134">
    <property type="term" value="P:negative regulation of G1/S transition of mitotic cell cycle"/>
    <property type="evidence" value="ECO:0007669"/>
    <property type="project" value="Ensembl"/>
</dbReference>
<dbReference type="GO" id="GO:0034351">
    <property type="term" value="P:negative regulation of glial cell apoptotic process"/>
    <property type="evidence" value="ECO:0007669"/>
    <property type="project" value="Ensembl"/>
</dbReference>
<dbReference type="GO" id="GO:2000502">
    <property type="term" value="P:negative regulation of natural killer cell chemotaxis"/>
    <property type="evidence" value="ECO:0007669"/>
    <property type="project" value="Ensembl"/>
</dbReference>
<dbReference type="GO" id="GO:0043524">
    <property type="term" value="P:negative regulation of neuron apoptotic process"/>
    <property type="evidence" value="ECO:0007669"/>
    <property type="project" value="Ensembl"/>
</dbReference>
<dbReference type="GO" id="GO:1905563">
    <property type="term" value="P:negative regulation of vascular endothelial cell proliferation"/>
    <property type="evidence" value="ECO:0007669"/>
    <property type="project" value="Ensembl"/>
</dbReference>
<dbReference type="GO" id="GO:0090280">
    <property type="term" value="P:positive regulation of calcium ion import"/>
    <property type="evidence" value="ECO:0007669"/>
    <property type="project" value="Ensembl"/>
</dbReference>
<dbReference type="GO" id="GO:0030335">
    <property type="term" value="P:positive regulation of cell migration"/>
    <property type="evidence" value="ECO:0000318"/>
    <property type="project" value="GO_Central"/>
</dbReference>
<dbReference type="GO" id="GO:2000353">
    <property type="term" value="P:positive regulation of endothelial cell apoptotic process"/>
    <property type="evidence" value="ECO:0007669"/>
    <property type="project" value="Ensembl"/>
</dbReference>
<dbReference type="GO" id="GO:0051968">
    <property type="term" value="P:positive regulation of synaptic transmission, glutamatergic"/>
    <property type="evidence" value="ECO:0000250"/>
    <property type="project" value="UniProtKB"/>
</dbReference>
<dbReference type="GO" id="GO:0008360">
    <property type="term" value="P:regulation of cell shape"/>
    <property type="evidence" value="ECO:0007669"/>
    <property type="project" value="Ensembl"/>
</dbReference>
<dbReference type="GO" id="GO:0019233">
    <property type="term" value="P:sensory perception of pain"/>
    <property type="evidence" value="ECO:0000250"/>
    <property type="project" value="UniProtKB"/>
</dbReference>
<dbReference type="CDD" id="cd00272">
    <property type="entry name" value="Chemokine_CC"/>
    <property type="match status" value="1"/>
</dbReference>
<dbReference type="FunFam" id="2.40.50.40:FF:000002">
    <property type="entry name" value="C-C motif chemokine"/>
    <property type="match status" value="1"/>
</dbReference>
<dbReference type="Gene3D" id="2.40.50.40">
    <property type="match status" value="1"/>
</dbReference>
<dbReference type="InterPro" id="IPR039809">
    <property type="entry name" value="Chemokine_b/g/d"/>
</dbReference>
<dbReference type="InterPro" id="IPR000827">
    <property type="entry name" value="Chemokine_CC_CS"/>
</dbReference>
<dbReference type="InterPro" id="IPR001811">
    <property type="entry name" value="Chemokine_IL8-like_dom"/>
</dbReference>
<dbReference type="InterPro" id="IPR036048">
    <property type="entry name" value="Interleukin_8-like_sf"/>
</dbReference>
<dbReference type="PANTHER" id="PTHR12015:SF98">
    <property type="entry name" value="C-C MOTIF CHEMOKINE 2"/>
    <property type="match status" value="1"/>
</dbReference>
<dbReference type="PANTHER" id="PTHR12015">
    <property type="entry name" value="SMALL INDUCIBLE CYTOKINE A"/>
    <property type="match status" value="1"/>
</dbReference>
<dbReference type="Pfam" id="PF00048">
    <property type="entry name" value="IL8"/>
    <property type="match status" value="1"/>
</dbReference>
<dbReference type="SMART" id="SM00199">
    <property type="entry name" value="SCY"/>
    <property type="match status" value="1"/>
</dbReference>
<dbReference type="SUPFAM" id="SSF54117">
    <property type="entry name" value="Interleukin 8-like chemokines"/>
    <property type="match status" value="1"/>
</dbReference>
<dbReference type="PROSITE" id="PS00472">
    <property type="entry name" value="SMALL_CYTOKINES_CC"/>
    <property type="match status" value="1"/>
</dbReference>
<organism>
    <name type="scientific">Bos taurus</name>
    <name type="common">Bovine</name>
    <dbReference type="NCBI Taxonomy" id="9913"/>
    <lineage>
        <taxon>Eukaryota</taxon>
        <taxon>Metazoa</taxon>
        <taxon>Chordata</taxon>
        <taxon>Craniata</taxon>
        <taxon>Vertebrata</taxon>
        <taxon>Euteleostomi</taxon>
        <taxon>Mammalia</taxon>
        <taxon>Eutheria</taxon>
        <taxon>Laurasiatheria</taxon>
        <taxon>Artiodactyla</taxon>
        <taxon>Ruminantia</taxon>
        <taxon>Pecora</taxon>
        <taxon>Bovidae</taxon>
        <taxon>Bovinae</taxon>
        <taxon>Bos</taxon>
    </lineage>
</organism>
<comment type="function">
    <text evidence="2 3">Acts as a ligand for C-C chemokine receptor CCR2 (By similarity). Signals through binding and activation of CCR2 and induces a strong chemotactic response and mobilization of intracellular calcium ions (By similarity). Exhibits a chemotactic activity for monocytes and basophils but not neutrophils or eosinophils (By similarity). Plays an important role in mediating peripheral nerve injury-induced neuropathic pain (By similarity). Increases NMDA-mediated synaptic transmission in both dopamine D1 and D2 receptor-containing neurons, which may be caused by MAPK/ERK-dependent phosphorylation of GRIN2B/NMDAR2B (By similarity).</text>
</comment>
<comment type="subunit">
    <text evidence="3">Monomer or homodimer; in equilibrium. Is tethered on endothelial cells by glycosaminoglycan (GAG) side chains of proteoglycans. Interacts with TNFAIP6 (via Link domain).</text>
</comment>
<comment type="subcellular location">
    <subcellularLocation>
        <location evidence="3">Secreted</location>
    </subcellularLocation>
</comment>
<comment type="PTM">
    <text evidence="3">Processing at the N-terminus can regulate receptor and target cell selectivity (By similarity). Deletion of the N-terminal residue converts it from an activator of basophil to an eosinophil chemoattractant (By similarity).</text>
</comment>
<comment type="PTM">
    <text evidence="3">N-Glycosylated.</text>
</comment>
<comment type="similarity">
    <text evidence="4">Belongs to the intercrine beta (chemokine CC) family.</text>
</comment>
<proteinExistence type="inferred from homology"/>
<protein>
    <recommendedName>
        <fullName>C-C motif chemokine 2</fullName>
    </recommendedName>
    <alternativeName>
        <fullName>Acidic seminal fluid protein</fullName>
    </alternativeName>
    <alternativeName>
        <fullName>Monocyte chemotactic protein 1A</fullName>
        <shortName>MCP-1</shortName>
        <shortName>MCP-1A</shortName>
    </alternativeName>
    <alternativeName>
        <fullName>Small-inducible cytokine A2</fullName>
    </alternativeName>
</protein>
<keyword id="KW-0145">Chemotaxis</keyword>
<keyword id="KW-0202">Cytokine</keyword>
<keyword id="KW-1015">Disulfide bond</keyword>
<keyword id="KW-0395">Inflammatory response</keyword>
<keyword id="KW-0873">Pyrrolidone carboxylic acid</keyword>
<keyword id="KW-1185">Reference proteome</keyword>
<keyword id="KW-0964">Secreted</keyword>
<keyword id="KW-0732">Signal</keyword>
<sequence>MKVSAALLCLLLTVAAFSTEVLAQPDAINSQVACCYTFNSKKISMQRLMNYRRVTSSKCPKEAVIFKTILGKELCADPKQKWVQDSINYLNKKNQTPKP</sequence>